<gene>
    <name type="primary">FDX3</name>
    <name type="synonym">PFD3</name>
</gene>
<keyword id="KW-0001">2Fe-2S</keyword>
<keyword id="KW-0002">3D-structure</keyword>
<keyword id="KW-0150">Chloroplast</keyword>
<keyword id="KW-0249">Electron transport</keyword>
<keyword id="KW-0408">Iron</keyword>
<keyword id="KW-0411">Iron-sulfur</keyword>
<keyword id="KW-0479">Metal-binding</keyword>
<keyword id="KW-0934">Plastid</keyword>
<keyword id="KW-1185">Reference proteome</keyword>
<keyword id="KW-0809">Transit peptide</keyword>
<keyword id="KW-0813">Transport</keyword>
<reference key="1">
    <citation type="journal article" date="1991" name="Plant Physiol.">
        <title>Molecular cloning and differential expression of the maize ferredoxin gene family.</title>
        <authorList>
            <person name="Hase T."/>
            <person name="Kimatsa Y."/>
            <person name="Yonekura K."/>
            <person name="Matsumura T."/>
            <person name="Sakakibara H."/>
        </authorList>
    </citation>
    <scope>NUCLEOTIDE SEQUENCE</scope>
</reference>
<reference key="2">
    <citation type="journal article" date="1997" name="Plant Cell Physiol.">
        <title>Cloning of maize ferredoxin III gene: presence of a unique repetitive nucleotide sequence within an intron found in the 5'-untranslated region.</title>
        <authorList>
            <person name="Nakano R."/>
            <person name="Matsumura T."/>
            <person name="Sakakibara H."/>
            <person name="Sugiyama T."/>
            <person name="Hase T."/>
        </authorList>
    </citation>
    <scope>NUCLEOTIDE SEQUENCE [GENOMIC DNA]</scope>
</reference>
<proteinExistence type="evidence at protein level"/>
<evidence type="ECO:0000250" key="1"/>
<evidence type="ECO:0000255" key="2">
    <source>
        <dbReference type="PROSITE-ProRule" id="PRU00465"/>
    </source>
</evidence>
<evidence type="ECO:0000305" key="3"/>
<evidence type="ECO:0007829" key="4">
    <source>
        <dbReference type="PDB" id="5H57"/>
    </source>
</evidence>
<sequence>MSTSTFATSCTLLGNVRTTQASQTAVKSPSSLSFFSQVTKVPSLKTSKKLDVSAMAVYKVKLVGPEGEEHEFDAPDDAYILDAAETAGVELPYSCRAGACSTCAGKIESGSVDQSDGSFLDDGQQEEGYVLTCVSYPKSDCVIHTHKEGDLY</sequence>
<comment type="function">
    <text>Ferredoxins are iron-sulfur proteins that transfer electrons in a wide variety of metabolic reactions.</text>
</comment>
<comment type="cofactor">
    <cofactor>
        <name>[2Fe-2S] cluster</name>
        <dbReference type="ChEBI" id="CHEBI:190135"/>
    </cofactor>
    <text>Binds 1 [2Fe-2S] cluster.</text>
</comment>
<comment type="subcellular location">
    <subcellularLocation>
        <location>Plastid</location>
        <location>Chloroplast</location>
    </subcellularLocation>
</comment>
<comment type="similarity">
    <text evidence="3">Belongs to the 2Fe2S plant-type ferredoxin family.</text>
</comment>
<dbReference type="EMBL" id="M73831">
    <property type="protein sequence ID" value="AAA33461.1"/>
    <property type="molecule type" value="mRNA"/>
</dbReference>
<dbReference type="EMBL" id="AB001387">
    <property type="protein sequence ID" value="BAA19251.1"/>
    <property type="molecule type" value="Genomic_DNA"/>
</dbReference>
<dbReference type="PIR" id="T02881">
    <property type="entry name" value="T02881"/>
</dbReference>
<dbReference type="RefSeq" id="NP_001105346.1">
    <property type="nucleotide sequence ID" value="NM_001111876.1"/>
</dbReference>
<dbReference type="RefSeq" id="XP_008648612.1">
    <property type="nucleotide sequence ID" value="XM_008650390.1"/>
</dbReference>
<dbReference type="PDB" id="5H57">
    <property type="method" value="X-ray"/>
    <property type="resolution" value="2.50 A"/>
    <property type="chains" value="A/B/C/D/E/F=56-152"/>
</dbReference>
<dbReference type="PDB" id="5H5J">
    <property type="method" value="X-ray"/>
    <property type="resolution" value="2.50 A"/>
    <property type="chains" value="B=56-152"/>
</dbReference>
<dbReference type="PDBsum" id="5H57"/>
<dbReference type="PDBsum" id="5H5J"/>
<dbReference type="SMR" id="P27788"/>
<dbReference type="FunCoup" id="P27788">
    <property type="interactions" value="226"/>
</dbReference>
<dbReference type="STRING" id="4577.P27788"/>
<dbReference type="EnsemblPlants" id="Zm00001eb063710_T001">
    <property type="protein sequence ID" value="Zm00001eb063710_P001"/>
    <property type="gene ID" value="Zm00001eb063710"/>
</dbReference>
<dbReference type="EnsemblPlants" id="Zm00001eb063710_T002">
    <property type="protein sequence ID" value="Zm00001eb063710_P002"/>
    <property type="gene ID" value="Zm00001eb063710"/>
</dbReference>
<dbReference type="Gramene" id="Zm00001eb063710_T001">
    <property type="protein sequence ID" value="Zm00001eb063710_P001"/>
    <property type="gene ID" value="Zm00001eb063710"/>
</dbReference>
<dbReference type="Gramene" id="Zm00001eb063710_T002">
    <property type="protein sequence ID" value="Zm00001eb063710_P002"/>
    <property type="gene ID" value="Zm00001eb063710"/>
</dbReference>
<dbReference type="MaizeGDB" id="66392"/>
<dbReference type="HOGENOM" id="CLU_082632_1_2_1"/>
<dbReference type="InParanoid" id="P27788"/>
<dbReference type="OMA" id="RASANMY"/>
<dbReference type="OrthoDB" id="1885901at2759"/>
<dbReference type="SABIO-RK" id="P27788"/>
<dbReference type="Proteomes" id="UP000007305">
    <property type="component" value="Chromosome 1"/>
</dbReference>
<dbReference type="ExpressionAtlas" id="P27788">
    <property type="expression patterns" value="baseline and differential"/>
</dbReference>
<dbReference type="GO" id="GO:0009507">
    <property type="term" value="C:chloroplast"/>
    <property type="evidence" value="ECO:0000304"/>
    <property type="project" value="AgBase"/>
</dbReference>
<dbReference type="GO" id="GO:0009570">
    <property type="term" value="C:chloroplast stroma"/>
    <property type="evidence" value="ECO:0000314"/>
    <property type="project" value="AgBase"/>
</dbReference>
<dbReference type="GO" id="GO:0009578">
    <property type="term" value="C:etioplast stroma"/>
    <property type="evidence" value="ECO:0000314"/>
    <property type="project" value="AgBase"/>
</dbReference>
<dbReference type="GO" id="GO:0051537">
    <property type="term" value="F:2 iron, 2 sulfur cluster binding"/>
    <property type="evidence" value="ECO:0000314"/>
    <property type="project" value="AgBase"/>
</dbReference>
<dbReference type="GO" id="GO:0009055">
    <property type="term" value="F:electron transfer activity"/>
    <property type="evidence" value="ECO:0000314"/>
    <property type="project" value="AgBase"/>
</dbReference>
<dbReference type="GO" id="GO:0046872">
    <property type="term" value="F:metal ion binding"/>
    <property type="evidence" value="ECO:0007669"/>
    <property type="project" value="UniProtKB-KW"/>
</dbReference>
<dbReference type="GO" id="GO:0022900">
    <property type="term" value="P:electron transport chain"/>
    <property type="evidence" value="ECO:0000314"/>
    <property type="project" value="AgBase"/>
</dbReference>
<dbReference type="CDD" id="cd00207">
    <property type="entry name" value="fer2"/>
    <property type="match status" value="1"/>
</dbReference>
<dbReference type="FunFam" id="3.10.20.30:FF:000014">
    <property type="entry name" value="Ferredoxin"/>
    <property type="match status" value="1"/>
</dbReference>
<dbReference type="Gene3D" id="3.10.20.30">
    <property type="match status" value="1"/>
</dbReference>
<dbReference type="InterPro" id="IPR036010">
    <property type="entry name" value="2Fe-2S_ferredoxin-like_sf"/>
</dbReference>
<dbReference type="InterPro" id="IPR001041">
    <property type="entry name" value="2Fe-2S_ferredoxin-type"/>
</dbReference>
<dbReference type="InterPro" id="IPR006058">
    <property type="entry name" value="2Fe2S_fd_BS"/>
</dbReference>
<dbReference type="InterPro" id="IPR012675">
    <property type="entry name" value="Beta-grasp_dom_sf"/>
</dbReference>
<dbReference type="InterPro" id="IPR010241">
    <property type="entry name" value="Fd_pln"/>
</dbReference>
<dbReference type="NCBIfam" id="TIGR02008">
    <property type="entry name" value="fdx_plant"/>
    <property type="match status" value="1"/>
</dbReference>
<dbReference type="PANTHER" id="PTHR43112">
    <property type="entry name" value="FERREDOXIN"/>
    <property type="match status" value="1"/>
</dbReference>
<dbReference type="PANTHER" id="PTHR43112:SF30">
    <property type="entry name" value="FERREDOXIN-3, CHLOROPLASTIC"/>
    <property type="match status" value="1"/>
</dbReference>
<dbReference type="Pfam" id="PF00111">
    <property type="entry name" value="Fer2"/>
    <property type="match status" value="1"/>
</dbReference>
<dbReference type="SUPFAM" id="SSF54292">
    <property type="entry name" value="2Fe-2S ferredoxin-like"/>
    <property type="match status" value="1"/>
</dbReference>
<dbReference type="PROSITE" id="PS00197">
    <property type="entry name" value="2FE2S_FER_1"/>
    <property type="match status" value="1"/>
</dbReference>
<dbReference type="PROSITE" id="PS51085">
    <property type="entry name" value="2FE2S_FER_2"/>
    <property type="match status" value="1"/>
</dbReference>
<protein>
    <recommendedName>
        <fullName>Ferredoxin-3, chloroplastic</fullName>
    </recommendedName>
    <alternativeName>
        <fullName>Ferredoxin III</fullName>
        <shortName>Fd III</shortName>
    </alternativeName>
</protein>
<feature type="transit peptide" description="Chloroplast" evidence="1">
    <location>
        <begin position="1"/>
        <end position="55"/>
    </location>
</feature>
<feature type="chain" id="PRO_0000008831" description="Ferredoxin-3, chloroplastic">
    <location>
        <begin position="56"/>
        <end position="152"/>
    </location>
</feature>
<feature type="domain" description="2Fe-2S ferredoxin-type" evidence="2">
    <location>
        <begin position="58"/>
        <end position="149"/>
    </location>
</feature>
<feature type="binding site" evidence="2">
    <location>
        <position position="95"/>
    </location>
    <ligand>
        <name>[2Fe-2S] cluster</name>
        <dbReference type="ChEBI" id="CHEBI:190135"/>
    </ligand>
</feature>
<feature type="binding site" evidence="2">
    <location>
        <position position="100"/>
    </location>
    <ligand>
        <name>[2Fe-2S] cluster</name>
        <dbReference type="ChEBI" id="CHEBI:190135"/>
    </ligand>
</feature>
<feature type="binding site" evidence="2">
    <location>
        <position position="103"/>
    </location>
    <ligand>
        <name>[2Fe-2S] cluster</name>
        <dbReference type="ChEBI" id="CHEBI:190135"/>
    </ligand>
</feature>
<feature type="binding site" evidence="2">
    <location>
        <position position="133"/>
    </location>
    <ligand>
        <name>[2Fe-2S] cluster</name>
        <dbReference type="ChEBI" id="CHEBI:190135"/>
    </ligand>
</feature>
<feature type="strand" evidence="4">
    <location>
        <begin position="57"/>
        <end position="63"/>
    </location>
</feature>
<feature type="strand" evidence="4">
    <location>
        <begin position="69"/>
        <end position="75"/>
    </location>
</feature>
<feature type="helix" evidence="4">
    <location>
        <begin position="80"/>
        <end position="86"/>
    </location>
</feature>
<feature type="strand" evidence="4">
    <location>
        <begin position="94"/>
        <end position="101"/>
    </location>
</feature>
<feature type="strand" evidence="4">
    <location>
        <begin position="104"/>
        <end position="110"/>
    </location>
</feature>
<feature type="helix" evidence="4">
    <location>
        <begin position="122"/>
        <end position="126"/>
    </location>
</feature>
<feature type="strand" evidence="4">
    <location>
        <begin position="129"/>
        <end position="131"/>
    </location>
</feature>
<feature type="helix" evidence="4">
    <location>
        <begin position="132"/>
        <end position="134"/>
    </location>
</feature>
<feature type="strand" evidence="4">
    <location>
        <begin position="136"/>
        <end position="139"/>
    </location>
</feature>
<feature type="strand" evidence="4">
    <location>
        <begin position="141"/>
        <end position="144"/>
    </location>
</feature>
<feature type="helix" evidence="4">
    <location>
        <begin position="148"/>
        <end position="151"/>
    </location>
</feature>
<organism>
    <name type="scientific">Zea mays</name>
    <name type="common">Maize</name>
    <dbReference type="NCBI Taxonomy" id="4577"/>
    <lineage>
        <taxon>Eukaryota</taxon>
        <taxon>Viridiplantae</taxon>
        <taxon>Streptophyta</taxon>
        <taxon>Embryophyta</taxon>
        <taxon>Tracheophyta</taxon>
        <taxon>Spermatophyta</taxon>
        <taxon>Magnoliopsida</taxon>
        <taxon>Liliopsida</taxon>
        <taxon>Poales</taxon>
        <taxon>Poaceae</taxon>
        <taxon>PACMAD clade</taxon>
        <taxon>Panicoideae</taxon>
        <taxon>Andropogonodae</taxon>
        <taxon>Andropogoneae</taxon>
        <taxon>Tripsacinae</taxon>
        <taxon>Zea</taxon>
    </lineage>
</organism>
<name>FER3_MAIZE</name>
<accession>P27788</accession>